<evidence type="ECO:0000255" key="1">
    <source>
        <dbReference type="HAMAP-Rule" id="MF_00458"/>
    </source>
</evidence>
<feature type="chain" id="PRO_0000294227" description="Photosystem I P700 chlorophyll a apoprotein A1">
    <location>
        <begin position="1"/>
        <end position="750"/>
    </location>
</feature>
<feature type="transmembrane region" description="Helical; Name=I" evidence="1">
    <location>
        <begin position="70"/>
        <end position="93"/>
    </location>
</feature>
<feature type="transmembrane region" description="Helical; Name=II" evidence="1">
    <location>
        <begin position="156"/>
        <end position="179"/>
    </location>
</feature>
<feature type="transmembrane region" description="Helical; Name=III" evidence="1">
    <location>
        <begin position="195"/>
        <end position="219"/>
    </location>
</feature>
<feature type="transmembrane region" description="Helical; Name=IV" evidence="1">
    <location>
        <begin position="291"/>
        <end position="309"/>
    </location>
</feature>
<feature type="transmembrane region" description="Helical; Name=V" evidence="1">
    <location>
        <begin position="346"/>
        <end position="369"/>
    </location>
</feature>
<feature type="transmembrane region" description="Helical; Name=VI" evidence="1">
    <location>
        <begin position="385"/>
        <end position="411"/>
    </location>
</feature>
<feature type="transmembrane region" description="Helical; Name=VII" evidence="1">
    <location>
        <begin position="433"/>
        <end position="455"/>
    </location>
</feature>
<feature type="transmembrane region" description="Helical; Name=VIII" evidence="1">
    <location>
        <begin position="531"/>
        <end position="549"/>
    </location>
</feature>
<feature type="transmembrane region" description="Helical; Name=IX" evidence="1">
    <location>
        <begin position="589"/>
        <end position="610"/>
    </location>
</feature>
<feature type="transmembrane region" description="Helical; Name=X" evidence="1">
    <location>
        <begin position="664"/>
        <end position="686"/>
    </location>
</feature>
<feature type="transmembrane region" description="Helical; Name=XI" evidence="1">
    <location>
        <begin position="724"/>
        <end position="744"/>
    </location>
</feature>
<feature type="binding site" evidence="1">
    <location>
        <position position="573"/>
    </location>
    <ligand>
        <name>[4Fe-4S] cluster</name>
        <dbReference type="ChEBI" id="CHEBI:49883"/>
        <note>ligand shared between dimeric partners</note>
    </ligand>
</feature>
<feature type="binding site" evidence="1">
    <location>
        <position position="582"/>
    </location>
    <ligand>
        <name>[4Fe-4S] cluster</name>
        <dbReference type="ChEBI" id="CHEBI:49883"/>
        <note>ligand shared between dimeric partners</note>
    </ligand>
</feature>
<feature type="binding site" description="axial binding residue" evidence="1">
    <location>
        <position position="675"/>
    </location>
    <ligand>
        <name>chlorophyll a'</name>
        <dbReference type="ChEBI" id="CHEBI:189419"/>
        <label>A1</label>
    </ligand>
    <ligandPart>
        <name>Mg</name>
        <dbReference type="ChEBI" id="CHEBI:25107"/>
    </ligandPart>
</feature>
<feature type="binding site" description="axial binding residue" evidence="1">
    <location>
        <position position="683"/>
    </location>
    <ligand>
        <name>chlorophyll a</name>
        <dbReference type="ChEBI" id="CHEBI:58416"/>
        <label>A3</label>
    </ligand>
    <ligandPart>
        <name>Mg</name>
        <dbReference type="ChEBI" id="CHEBI:25107"/>
    </ligandPart>
</feature>
<feature type="binding site" evidence="1">
    <location>
        <position position="691"/>
    </location>
    <ligand>
        <name>chlorophyll a</name>
        <dbReference type="ChEBI" id="CHEBI:58416"/>
        <label>A3</label>
    </ligand>
</feature>
<feature type="binding site" evidence="1">
    <location>
        <position position="692"/>
    </location>
    <ligand>
        <name>phylloquinone</name>
        <dbReference type="ChEBI" id="CHEBI:18067"/>
        <label>A</label>
    </ligand>
</feature>
<geneLocation type="chloroplast"/>
<comment type="function">
    <text>PsaA and PsaB bind P700, the primary electron donor of photosystem I (PSI), as well as the electron acceptors A0, A1 and FX. PSI is a plastocyanin-ferredoxin oxidoreductase, converting photonic excitation into a charge separation, which transfers an electron from the donor P700 chlorophyll pair to the spectroscopically characterized acceptors A0, A1, FX, FA and FB in turn. Oxidized P700 is reduced on the lumenal side of the thylakoid membrane by plastocyanin.</text>
</comment>
<comment type="catalytic activity">
    <reaction evidence="1">
        <text>reduced [plastocyanin] + hnu + oxidized [2Fe-2S]-[ferredoxin] = oxidized [plastocyanin] + reduced [2Fe-2S]-[ferredoxin]</text>
        <dbReference type="Rhea" id="RHEA:30407"/>
        <dbReference type="Rhea" id="RHEA-COMP:10000"/>
        <dbReference type="Rhea" id="RHEA-COMP:10001"/>
        <dbReference type="Rhea" id="RHEA-COMP:10039"/>
        <dbReference type="Rhea" id="RHEA-COMP:10040"/>
        <dbReference type="ChEBI" id="CHEBI:29036"/>
        <dbReference type="ChEBI" id="CHEBI:30212"/>
        <dbReference type="ChEBI" id="CHEBI:33737"/>
        <dbReference type="ChEBI" id="CHEBI:33738"/>
        <dbReference type="ChEBI" id="CHEBI:49552"/>
        <dbReference type="EC" id="1.97.1.12"/>
    </reaction>
</comment>
<comment type="cofactor">
    <text evidence="1">P700 is a chlorophyll a/chlorophyll a' dimer, A0 is one or more chlorophyll a, A1 is one or both phylloquinones and FX is a shared 4Fe-4S iron-sulfur center.</text>
</comment>
<comment type="subunit">
    <text evidence="1">The PsaA/B heterodimer binds the P700 chlorophyll special pair and subsequent electron acceptors. PSI consists of a core antenna complex that captures photons, and an electron transfer chain that converts photonic excitation into a charge separation. The eukaryotic PSI reaction center is composed of at least 11 subunits.</text>
</comment>
<comment type="subcellular location">
    <subcellularLocation>
        <location evidence="1">Plastid</location>
        <location evidence="1">Chloroplast thylakoid membrane</location>
        <topology evidence="1">Multi-pass membrane protein</topology>
    </subcellularLocation>
</comment>
<comment type="similarity">
    <text evidence="1">Belongs to the PsaA/PsaB family.</text>
</comment>
<accession>A4QJT3</accession>
<sequence>MIIRSPEPEVKILVDRDPIKTSFEEWAKPGHFSRTIAKGPDTTTWIWNLHADAHDFDSHTSDLEEISRKVFSAHFGQLSIIFLWLSGMYFHGARFSNYEAWLSDPTHIGPSAQVVWPIVGQEILNGDVGGGFRGIQITSGFFQIWRASGITSELQLYCTAIGALVFAALMLFAGWFHYHKAAPKLAWFQDVESMLNHHLAGLLGLGSLSWAGHQVHVSLPINQFLNAGVDPKEIPLPHEFILNRDLLAQLYPSFAEGATPFFTLNWSKYSEFLTFRGGLDPVTGGLWLTDIAHHHLAIAILFLIAGHMYRTNWGIGHGIKDILEAHKGPFTGQGHKGLYEILTTSWHAQLSLNLAMLGSLTIIVAHHMYSMPPYPYLATDYATQLSLFTHHMWIGGFLIVGAAAHAAIFMVRDYDPTNRYNDLLDRVLRHRDAIISHLNWVCIFLGFHSFGLYIHNDTMSALGRPQDMFSDTAIQLQPVFAQWIQNTHALAPGVTAPGETASTSLTWGGGELVAVGGKVALLPIPLGTADFLVHHIHAFTIHVTVLILLKGVLFARSSRLIPDKANLGFRFPCDGPGRGGTCQVSAWDHVFLGLFWMYNAISVVIFHFSWKMQSDVWGSISDQGVVTHITGGNFAQSSITINGWLRDFLWAQASQVIQSYGSSLSAYGLFFLGAHFVWAFSLMFLFSGRGYWQELIESIVWAHNKLKVAPATQPRALSIVQGRAVGVTHYLLGGIATTWAFFLARIIAVG</sequence>
<dbReference type="EC" id="1.97.1.12" evidence="1"/>
<dbReference type="EMBL" id="AP009368">
    <property type="protein sequence ID" value="BAF49939.1"/>
    <property type="molecule type" value="Genomic_DNA"/>
</dbReference>
<dbReference type="RefSeq" id="YP_001123115.1">
    <property type="nucleotide sequence ID" value="NC_009267.1"/>
</dbReference>
<dbReference type="SMR" id="A4QJT3"/>
<dbReference type="GeneID" id="4962396"/>
<dbReference type="GO" id="GO:0009535">
    <property type="term" value="C:chloroplast thylakoid membrane"/>
    <property type="evidence" value="ECO:0007669"/>
    <property type="project" value="UniProtKB-SubCell"/>
</dbReference>
<dbReference type="GO" id="GO:0009522">
    <property type="term" value="C:photosystem I"/>
    <property type="evidence" value="ECO:0007669"/>
    <property type="project" value="UniProtKB-KW"/>
</dbReference>
<dbReference type="GO" id="GO:0051539">
    <property type="term" value="F:4 iron, 4 sulfur cluster binding"/>
    <property type="evidence" value="ECO:0007669"/>
    <property type="project" value="UniProtKB-KW"/>
</dbReference>
<dbReference type="GO" id="GO:0016168">
    <property type="term" value="F:chlorophyll binding"/>
    <property type="evidence" value="ECO:0007669"/>
    <property type="project" value="UniProtKB-KW"/>
</dbReference>
<dbReference type="GO" id="GO:0009055">
    <property type="term" value="F:electron transfer activity"/>
    <property type="evidence" value="ECO:0007669"/>
    <property type="project" value="UniProtKB-UniRule"/>
</dbReference>
<dbReference type="GO" id="GO:0000287">
    <property type="term" value="F:magnesium ion binding"/>
    <property type="evidence" value="ECO:0007669"/>
    <property type="project" value="UniProtKB-UniRule"/>
</dbReference>
<dbReference type="GO" id="GO:0016491">
    <property type="term" value="F:oxidoreductase activity"/>
    <property type="evidence" value="ECO:0007669"/>
    <property type="project" value="UniProtKB-KW"/>
</dbReference>
<dbReference type="GO" id="GO:0015979">
    <property type="term" value="P:photosynthesis"/>
    <property type="evidence" value="ECO:0007669"/>
    <property type="project" value="UniProtKB-UniRule"/>
</dbReference>
<dbReference type="FunFam" id="1.20.1130.10:FF:000001">
    <property type="entry name" value="Photosystem I P700 chlorophyll a apoprotein A2"/>
    <property type="match status" value="1"/>
</dbReference>
<dbReference type="Gene3D" id="1.20.1130.10">
    <property type="entry name" value="Photosystem I PsaA/PsaB"/>
    <property type="match status" value="1"/>
</dbReference>
<dbReference type="HAMAP" id="MF_00458">
    <property type="entry name" value="PSI_PsaA"/>
    <property type="match status" value="1"/>
</dbReference>
<dbReference type="InterPro" id="IPR006243">
    <property type="entry name" value="PSI_PsaA"/>
</dbReference>
<dbReference type="InterPro" id="IPR001280">
    <property type="entry name" value="PSI_PsaA/B"/>
</dbReference>
<dbReference type="InterPro" id="IPR020586">
    <property type="entry name" value="PSI_PsaA/B_CS"/>
</dbReference>
<dbReference type="InterPro" id="IPR036408">
    <property type="entry name" value="PSI_PsaA/B_sf"/>
</dbReference>
<dbReference type="NCBIfam" id="TIGR01335">
    <property type="entry name" value="psaA"/>
    <property type="match status" value="1"/>
</dbReference>
<dbReference type="PANTHER" id="PTHR30128">
    <property type="entry name" value="OUTER MEMBRANE PROTEIN, OMPA-RELATED"/>
    <property type="match status" value="1"/>
</dbReference>
<dbReference type="PANTHER" id="PTHR30128:SF19">
    <property type="entry name" value="PHOTOSYSTEM I P700 CHLOROPHYLL A APOPROTEIN A1-RELATED"/>
    <property type="match status" value="1"/>
</dbReference>
<dbReference type="Pfam" id="PF00223">
    <property type="entry name" value="PsaA_PsaB"/>
    <property type="match status" value="1"/>
</dbReference>
<dbReference type="PIRSF" id="PIRSF002905">
    <property type="entry name" value="PSI_A"/>
    <property type="match status" value="1"/>
</dbReference>
<dbReference type="PRINTS" id="PR00257">
    <property type="entry name" value="PHOTSYSPSAAB"/>
</dbReference>
<dbReference type="SUPFAM" id="SSF81558">
    <property type="entry name" value="Photosystem I subunits PsaA/PsaB"/>
    <property type="match status" value="1"/>
</dbReference>
<dbReference type="PROSITE" id="PS00419">
    <property type="entry name" value="PHOTOSYSTEM_I_PSAAB"/>
    <property type="match status" value="1"/>
</dbReference>
<gene>
    <name evidence="1" type="primary">psaA</name>
</gene>
<reference key="1">
    <citation type="submission" date="2007-03" db="EMBL/GenBank/DDBJ databases">
        <title>Sequence analysis of Arabidopsis pumila JS2 chloroplast DNA.</title>
        <authorList>
            <person name="Hosouchi T."/>
            <person name="Tsuruoka H."/>
            <person name="Kotani H."/>
        </authorList>
    </citation>
    <scope>NUCLEOTIDE SEQUENCE [LARGE SCALE GENOMIC DNA]</scope>
</reference>
<protein>
    <recommendedName>
        <fullName evidence="1">Photosystem I P700 chlorophyll a apoprotein A1</fullName>
        <ecNumber evidence="1">1.97.1.12</ecNumber>
    </recommendedName>
    <alternativeName>
        <fullName evidence="1">PSI-A</fullName>
    </alternativeName>
    <alternativeName>
        <fullName evidence="1">PsaA</fullName>
    </alternativeName>
</protein>
<keyword id="KW-0004">4Fe-4S</keyword>
<keyword id="KW-0148">Chlorophyll</keyword>
<keyword id="KW-0150">Chloroplast</keyword>
<keyword id="KW-0157">Chromophore</keyword>
<keyword id="KW-0249">Electron transport</keyword>
<keyword id="KW-0408">Iron</keyword>
<keyword id="KW-0411">Iron-sulfur</keyword>
<keyword id="KW-0460">Magnesium</keyword>
<keyword id="KW-0472">Membrane</keyword>
<keyword id="KW-0479">Metal-binding</keyword>
<keyword id="KW-0560">Oxidoreductase</keyword>
<keyword id="KW-0602">Photosynthesis</keyword>
<keyword id="KW-0603">Photosystem I</keyword>
<keyword id="KW-0934">Plastid</keyword>
<keyword id="KW-0793">Thylakoid</keyword>
<keyword id="KW-0812">Transmembrane</keyword>
<keyword id="KW-1133">Transmembrane helix</keyword>
<keyword id="KW-0813">Transport</keyword>
<proteinExistence type="inferred from homology"/>
<name>PSAA_OLIPU</name>
<organism>
    <name type="scientific">Olimarabidopsis pumila</name>
    <name type="common">Dwarf rocket</name>
    <name type="synonym">Arabidopsis griffithiana</name>
    <dbReference type="NCBI Taxonomy" id="74718"/>
    <lineage>
        <taxon>Eukaryota</taxon>
        <taxon>Viridiplantae</taxon>
        <taxon>Streptophyta</taxon>
        <taxon>Embryophyta</taxon>
        <taxon>Tracheophyta</taxon>
        <taxon>Spermatophyta</taxon>
        <taxon>Magnoliopsida</taxon>
        <taxon>eudicotyledons</taxon>
        <taxon>Gunneridae</taxon>
        <taxon>Pentapetalae</taxon>
        <taxon>rosids</taxon>
        <taxon>malvids</taxon>
        <taxon>Brassicales</taxon>
        <taxon>Brassicaceae</taxon>
        <taxon>Alyssopsideae</taxon>
        <taxon>Olimarabidopsis</taxon>
    </lineage>
</organism>